<accession>Q7VIL7</accession>
<dbReference type="EC" id="3.1.-.-" evidence="1"/>
<dbReference type="EMBL" id="AE017125">
    <property type="protein sequence ID" value="AAP77184.1"/>
    <property type="status" value="ALT_INIT"/>
    <property type="molecule type" value="Genomic_DNA"/>
</dbReference>
<dbReference type="RefSeq" id="WP_034366339.1">
    <property type="nucleotide sequence ID" value="NC_004917.1"/>
</dbReference>
<dbReference type="SMR" id="Q7VIL7"/>
<dbReference type="STRING" id="235279.HH_0587"/>
<dbReference type="KEGG" id="hhe:HH_0587"/>
<dbReference type="eggNOG" id="COG1418">
    <property type="taxonomic scope" value="Bacteria"/>
</dbReference>
<dbReference type="HOGENOM" id="CLU_028328_1_0_7"/>
<dbReference type="OrthoDB" id="9803205at2"/>
<dbReference type="Proteomes" id="UP000002495">
    <property type="component" value="Chromosome"/>
</dbReference>
<dbReference type="GO" id="GO:0005886">
    <property type="term" value="C:plasma membrane"/>
    <property type="evidence" value="ECO:0007669"/>
    <property type="project" value="UniProtKB-SubCell"/>
</dbReference>
<dbReference type="GO" id="GO:0003723">
    <property type="term" value="F:RNA binding"/>
    <property type="evidence" value="ECO:0007669"/>
    <property type="project" value="UniProtKB-UniRule"/>
</dbReference>
<dbReference type="GO" id="GO:0004521">
    <property type="term" value="F:RNA endonuclease activity"/>
    <property type="evidence" value="ECO:0007669"/>
    <property type="project" value="UniProtKB-UniRule"/>
</dbReference>
<dbReference type="GO" id="GO:0006402">
    <property type="term" value="P:mRNA catabolic process"/>
    <property type="evidence" value="ECO:0007669"/>
    <property type="project" value="UniProtKB-UniRule"/>
</dbReference>
<dbReference type="CDD" id="cd00077">
    <property type="entry name" value="HDc"/>
    <property type="match status" value="1"/>
</dbReference>
<dbReference type="CDD" id="cd22431">
    <property type="entry name" value="KH-I_RNaseY"/>
    <property type="match status" value="1"/>
</dbReference>
<dbReference type="Gene3D" id="1.10.3210.10">
    <property type="entry name" value="Hypothetical protein af1432"/>
    <property type="match status" value="1"/>
</dbReference>
<dbReference type="Gene3D" id="3.30.1370.10">
    <property type="entry name" value="K Homology domain, type 1"/>
    <property type="match status" value="1"/>
</dbReference>
<dbReference type="HAMAP" id="MF_00335">
    <property type="entry name" value="RNase_Y"/>
    <property type="match status" value="1"/>
</dbReference>
<dbReference type="InterPro" id="IPR003607">
    <property type="entry name" value="HD/PDEase_dom"/>
</dbReference>
<dbReference type="InterPro" id="IPR006674">
    <property type="entry name" value="HD_domain"/>
</dbReference>
<dbReference type="InterPro" id="IPR006675">
    <property type="entry name" value="HDIG_dom"/>
</dbReference>
<dbReference type="InterPro" id="IPR004087">
    <property type="entry name" value="KH_dom"/>
</dbReference>
<dbReference type="InterPro" id="IPR004088">
    <property type="entry name" value="KH_dom_type_1"/>
</dbReference>
<dbReference type="InterPro" id="IPR036612">
    <property type="entry name" value="KH_dom_type_1_sf"/>
</dbReference>
<dbReference type="InterPro" id="IPR017705">
    <property type="entry name" value="Ribonuclease_Y"/>
</dbReference>
<dbReference type="InterPro" id="IPR022711">
    <property type="entry name" value="RNase_Y_N"/>
</dbReference>
<dbReference type="NCBIfam" id="TIGR00277">
    <property type="entry name" value="HDIG"/>
    <property type="match status" value="1"/>
</dbReference>
<dbReference type="NCBIfam" id="TIGR03319">
    <property type="entry name" value="RNase_Y"/>
    <property type="match status" value="1"/>
</dbReference>
<dbReference type="PANTHER" id="PTHR12826">
    <property type="entry name" value="RIBONUCLEASE Y"/>
    <property type="match status" value="1"/>
</dbReference>
<dbReference type="PANTHER" id="PTHR12826:SF15">
    <property type="entry name" value="RIBONUCLEASE Y"/>
    <property type="match status" value="1"/>
</dbReference>
<dbReference type="Pfam" id="PF01966">
    <property type="entry name" value="HD"/>
    <property type="match status" value="1"/>
</dbReference>
<dbReference type="Pfam" id="PF00013">
    <property type="entry name" value="KH_1"/>
    <property type="match status" value="1"/>
</dbReference>
<dbReference type="Pfam" id="PF12072">
    <property type="entry name" value="RNase_Y_N"/>
    <property type="match status" value="1"/>
</dbReference>
<dbReference type="SMART" id="SM00471">
    <property type="entry name" value="HDc"/>
    <property type="match status" value="1"/>
</dbReference>
<dbReference type="SMART" id="SM00322">
    <property type="entry name" value="KH"/>
    <property type="match status" value="1"/>
</dbReference>
<dbReference type="SUPFAM" id="SSF54791">
    <property type="entry name" value="Eukaryotic type KH-domain (KH-domain type I)"/>
    <property type="match status" value="1"/>
</dbReference>
<dbReference type="SUPFAM" id="SSF109604">
    <property type="entry name" value="HD-domain/PDEase-like"/>
    <property type="match status" value="1"/>
</dbReference>
<dbReference type="PROSITE" id="PS51831">
    <property type="entry name" value="HD"/>
    <property type="match status" value="1"/>
</dbReference>
<dbReference type="PROSITE" id="PS50084">
    <property type="entry name" value="KH_TYPE_1"/>
    <property type="match status" value="1"/>
</dbReference>
<proteinExistence type="inferred from homology"/>
<comment type="function">
    <text evidence="1">Endoribonuclease that initiates mRNA decay.</text>
</comment>
<comment type="subcellular location">
    <subcellularLocation>
        <location evidence="1">Cell membrane</location>
        <topology evidence="1">Single-pass membrane protein</topology>
    </subcellularLocation>
</comment>
<comment type="similarity">
    <text evidence="1">Belongs to the RNase Y family.</text>
</comment>
<comment type="sequence caution" evidence="3">
    <conflict type="erroneous initiation">
        <sequence resource="EMBL-CDS" id="AAP77184"/>
    </conflict>
</comment>
<organism>
    <name type="scientific">Helicobacter hepaticus (strain ATCC 51449 / 3B1)</name>
    <dbReference type="NCBI Taxonomy" id="235279"/>
    <lineage>
        <taxon>Bacteria</taxon>
        <taxon>Pseudomonadati</taxon>
        <taxon>Campylobacterota</taxon>
        <taxon>Epsilonproteobacteria</taxon>
        <taxon>Campylobacterales</taxon>
        <taxon>Helicobacteraceae</taxon>
        <taxon>Helicobacter</taxon>
    </lineage>
</organism>
<sequence>MGVWYAIGSIIFGLLVGVSVYLISRKIFHSNSQIIIEQAKAKAKAIEYEAQNILQKHHMQIKEEQMRLKQEYEQECATLHKNYESRLAKLDKEESNRYQQLNNQKQEVEKEKQEIAELKVRLLRSQGEQDKLKQEYQHIKKEMLDVLSKYAQMTREEATNILLSHLEEELIEEKAFLIRRYEKQAYDEAKKQANFVLAQATTRYAGDFATERLVNVINLPNDELKGRIIGKEGRNIKTLETISGVDVIVDDTPGSIILSSFNLYRRAIATKTIEKLVEDGRIQPSRIEEVYERVKDEMDEQMRQDGENIVLDMELGYMHPELKFLLGKMRYRASFGQNALGHSIEVANLAAIIAGELGGDEKLARRAGILHDIGKALTQELGGSHVDLGVEVCTCYKEHPVVINAIKAHHGYEEIQSIECAAVCAADTLSAARPGARREALENFLKRMQDIERIAMDKIGVKQAYAINAGREVRVIARADLVSDGQSVILAREIAKEIESTLQYPGEIKVSVIRETRAVEFAR</sequence>
<name>RNY_HELHP</name>
<reference key="1">
    <citation type="journal article" date="2003" name="Proc. Natl. Acad. Sci. U.S.A.">
        <title>The complete genome sequence of the carcinogenic bacterium Helicobacter hepaticus.</title>
        <authorList>
            <person name="Suerbaum S."/>
            <person name="Josenhans C."/>
            <person name="Sterzenbach T."/>
            <person name="Drescher B."/>
            <person name="Brandt P."/>
            <person name="Bell M."/>
            <person name="Droege M."/>
            <person name="Fartmann B."/>
            <person name="Fischer H.-P."/>
            <person name="Ge Z."/>
            <person name="Hoerster A."/>
            <person name="Holland R."/>
            <person name="Klein K."/>
            <person name="Koenig J."/>
            <person name="Macko L."/>
            <person name="Mendz G.L."/>
            <person name="Nyakatura G."/>
            <person name="Schauer D.B."/>
            <person name="Shen Z."/>
            <person name="Weber J."/>
            <person name="Frosch M."/>
            <person name="Fox J.G."/>
        </authorList>
    </citation>
    <scope>NUCLEOTIDE SEQUENCE [LARGE SCALE GENOMIC DNA]</scope>
    <source>
        <strain>ATCC 51449 / 3B1</strain>
    </source>
</reference>
<feature type="chain" id="PRO_0000344885" description="Ribonuclease Y">
    <location>
        <begin position="1"/>
        <end position="523"/>
    </location>
</feature>
<feature type="transmembrane region" description="Helical" evidence="1">
    <location>
        <begin position="3"/>
        <end position="23"/>
    </location>
</feature>
<feature type="domain" description="KH" evidence="1">
    <location>
        <begin position="213"/>
        <end position="279"/>
    </location>
</feature>
<feature type="domain" description="HD" evidence="2">
    <location>
        <begin position="339"/>
        <end position="432"/>
    </location>
</feature>
<protein>
    <recommendedName>
        <fullName evidence="1">Ribonuclease Y</fullName>
        <shortName evidence="1">RNase Y</shortName>
        <ecNumber evidence="1">3.1.-.-</ecNumber>
    </recommendedName>
</protein>
<gene>
    <name evidence="1" type="primary">rny</name>
    <name type="ordered locus">HH_0587</name>
</gene>
<evidence type="ECO:0000255" key="1">
    <source>
        <dbReference type="HAMAP-Rule" id="MF_00335"/>
    </source>
</evidence>
<evidence type="ECO:0000255" key="2">
    <source>
        <dbReference type="PROSITE-ProRule" id="PRU01175"/>
    </source>
</evidence>
<evidence type="ECO:0000305" key="3"/>
<keyword id="KW-1003">Cell membrane</keyword>
<keyword id="KW-0255">Endonuclease</keyword>
<keyword id="KW-0378">Hydrolase</keyword>
<keyword id="KW-0472">Membrane</keyword>
<keyword id="KW-0540">Nuclease</keyword>
<keyword id="KW-1185">Reference proteome</keyword>
<keyword id="KW-0694">RNA-binding</keyword>
<keyword id="KW-0812">Transmembrane</keyword>
<keyword id="KW-1133">Transmembrane helix</keyword>